<reference key="1">
    <citation type="submission" date="2004-11" db="EMBL/GenBank/DDBJ databases">
        <authorList>
            <consortium name="The German cDNA consortium"/>
        </authorList>
    </citation>
    <scope>NUCLEOTIDE SEQUENCE [LARGE SCALE MRNA]</scope>
    <source>
        <tissue>Brain cortex</tissue>
    </source>
</reference>
<accession>Q5NVE1</accession>
<proteinExistence type="evidence at transcript level"/>
<feature type="chain" id="PRO_0000175738" description="L-aminoadipate-semialdehyde dehydrogenase-phosphopantetheinyl transferase">
    <location>
        <begin position="1"/>
        <end position="309"/>
    </location>
</feature>
<feature type="binding site" evidence="1">
    <location>
        <position position="47"/>
    </location>
    <ligand>
        <name>CoA</name>
        <dbReference type="ChEBI" id="CHEBI:57287"/>
    </ligand>
</feature>
<feature type="binding site" evidence="1">
    <location>
        <begin position="86"/>
        <end position="91"/>
    </location>
    <ligand>
        <name>CoA</name>
        <dbReference type="ChEBI" id="CHEBI:57287"/>
    </ligand>
</feature>
<feature type="binding site" evidence="1">
    <location>
        <begin position="108"/>
        <end position="111"/>
    </location>
    <ligand>
        <name>CoA</name>
        <dbReference type="ChEBI" id="CHEBI:57287"/>
    </ligand>
</feature>
<feature type="binding site" evidence="1">
    <location>
        <position position="129"/>
    </location>
    <ligand>
        <name>Mg(2+)</name>
        <dbReference type="ChEBI" id="CHEBI:18420"/>
    </ligand>
</feature>
<feature type="binding site" evidence="1">
    <location>
        <begin position="181"/>
        <end position="185"/>
    </location>
    <ligand>
        <name>CoA</name>
        <dbReference type="ChEBI" id="CHEBI:57287"/>
    </ligand>
</feature>
<feature type="binding site" evidence="1">
    <location>
        <position position="181"/>
    </location>
    <ligand>
        <name>Mg(2+)</name>
        <dbReference type="ChEBI" id="CHEBI:18420"/>
    </ligand>
</feature>
<feature type="modified residue" description="Phosphoserine" evidence="1">
    <location>
        <position position="258"/>
    </location>
</feature>
<gene>
    <name type="primary">AASDHPPT</name>
</gene>
<comment type="function">
    <text evidence="1">Catalyzes the post-translational modification of target proteins by phosphopantetheine. Can transfer the 4'-phosphopantetheine moiety from coenzyme A, regardless of whether the CoA is presented in the free thiol form or as an acetyl thioester, to a serine residue of a broad range of acceptors including the acyl carrier domain of FASN.</text>
</comment>
<comment type="catalytic activity">
    <reaction evidence="1">
        <text>apo-[ACP] + CoA = holo-[ACP] + adenosine 3',5'-bisphosphate + H(+)</text>
        <dbReference type="Rhea" id="RHEA:12068"/>
        <dbReference type="Rhea" id="RHEA-COMP:9685"/>
        <dbReference type="Rhea" id="RHEA-COMP:9690"/>
        <dbReference type="ChEBI" id="CHEBI:15378"/>
        <dbReference type="ChEBI" id="CHEBI:29999"/>
        <dbReference type="ChEBI" id="CHEBI:57287"/>
        <dbReference type="ChEBI" id="CHEBI:58343"/>
        <dbReference type="ChEBI" id="CHEBI:64479"/>
        <dbReference type="EC" id="2.7.8.7"/>
    </reaction>
    <physiologicalReaction direction="left-to-right" evidence="1">
        <dbReference type="Rhea" id="RHEA:12069"/>
    </physiologicalReaction>
</comment>
<comment type="catalytic activity">
    <reaction evidence="1">
        <text>apo-[ACP] + acetyl-CoA = acetyl-[ACP] + adenosine 3',5'-bisphosphate + H(+)</text>
        <dbReference type="Rhea" id="RHEA:46564"/>
        <dbReference type="Rhea" id="RHEA-COMP:9621"/>
        <dbReference type="Rhea" id="RHEA-COMP:9690"/>
        <dbReference type="ChEBI" id="CHEBI:15378"/>
        <dbReference type="ChEBI" id="CHEBI:29999"/>
        <dbReference type="ChEBI" id="CHEBI:57288"/>
        <dbReference type="ChEBI" id="CHEBI:58343"/>
        <dbReference type="ChEBI" id="CHEBI:78446"/>
    </reaction>
    <physiologicalReaction direction="left-to-right" evidence="1">
        <dbReference type="Rhea" id="RHEA:46565"/>
    </physiologicalReaction>
</comment>
<comment type="cofactor">
    <cofactor evidence="1">
        <name>Mg(2+)</name>
        <dbReference type="ChEBI" id="CHEBI:18420"/>
    </cofactor>
    <text evidence="1">Binds 1 Mg(2+) ion.</text>
</comment>
<comment type="subunit">
    <text evidence="1">Monomer.</text>
</comment>
<comment type="subcellular location">
    <subcellularLocation>
        <location evidence="1">Cytoplasm</location>
        <location evidence="1">Cytosol</location>
    </subcellularLocation>
</comment>
<comment type="similarity">
    <text evidence="2">Belongs to the P-Pant transferase superfamily. AcpS family.</text>
</comment>
<sequence length="309" mass="35728">MVFPAKRFCLVPSMEGVRWAFSCGTWLPSRAEWLLAVRSIQPEEKERIGQFVFARDAKAAMAGRLMIRKLVAEKLNIPWNHIRLQRTAKGKPVLAKDSSNPYPNFNFNISHQGDYAVLAAEPELQVGIDIMKTSFPGRGSIPEFFHIMKRKFTNKEWETIRGFKDEWTQLDMFYRNWALKESFIKAIGVGLGFELQRLEFDLSPLNLDIGQVYKETRLFLDGEEEKEWAFEESKIDEHHFVAVALRKPDGSRHQDVPSQDDSKPTQRQFTILNFNDLISSAVPMTPEDPSFWDCFCFTEEIPIRNGTKS</sequence>
<name>ADPPT_PONAB</name>
<protein>
    <recommendedName>
        <fullName>L-aminoadipate-semialdehyde dehydrogenase-phosphopantetheinyl transferase</fullName>
        <ecNumber evidence="1">2.7.8.7</ecNumber>
    </recommendedName>
    <alternativeName>
        <fullName>4'-phosphopantetheinyl transferase</fullName>
    </alternativeName>
    <alternativeName>
        <fullName>Alpha-aminoadipic semialdehyde dehydrogenase-phosphopantetheinyl transferase</fullName>
        <shortName>AASD-PPT</shortName>
    </alternativeName>
</protein>
<keyword id="KW-0963">Cytoplasm</keyword>
<keyword id="KW-0460">Magnesium</keyword>
<keyword id="KW-0479">Metal-binding</keyword>
<keyword id="KW-0597">Phosphoprotein</keyword>
<keyword id="KW-1185">Reference proteome</keyword>
<keyword id="KW-0808">Transferase</keyword>
<evidence type="ECO:0000250" key="1">
    <source>
        <dbReference type="UniProtKB" id="Q9NRN7"/>
    </source>
</evidence>
<evidence type="ECO:0000305" key="2"/>
<organism>
    <name type="scientific">Pongo abelii</name>
    <name type="common">Sumatran orangutan</name>
    <name type="synonym">Pongo pygmaeus abelii</name>
    <dbReference type="NCBI Taxonomy" id="9601"/>
    <lineage>
        <taxon>Eukaryota</taxon>
        <taxon>Metazoa</taxon>
        <taxon>Chordata</taxon>
        <taxon>Craniata</taxon>
        <taxon>Vertebrata</taxon>
        <taxon>Euteleostomi</taxon>
        <taxon>Mammalia</taxon>
        <taxon>Eutheria</taxon>
        <taxon>Euarchontoglires</taxon>
        <taxon>Primates</taxon>
        <taxon>Haplorrhini</taxon>
        <taxon>Catarrhini</taxon>
        <taxon>Hominidae</taxon>
        <taxon>Pongo</taxon>
    </lineage>
</organism>
<dbReference type="EC" id="2.7.8.7" evidence="1"/>
<dbReference type="EMBL" id="CR926096">
    <property type="protein sequence ID" value="CAI29722.1"/>
    <property type="molecule type" value="mRNA"/>
</dbReference>
<dbReference type="RefSeq" id="NP_001127117.1">
    <property type="nucleotide sequence ID" value="NM_001133645.1"/>
</dbReference>
<dbReference type="SMR" id="Q5NVE1"/>
<dbReference type="STRING" id="9601.ENSPPYP00000004386"/>
<dbReference type="GeneID" id="100174162"/>
<dbReference type="KEGG" id="pon:100174162"/>
<dbReference type="CTD" id="60496"/>
<dbReference type="eggNOG" id="KOG0945">
    <property type="taxonomic scope" value="Eukaryota"/>
</dbReference>
<dbReference type="InParanoid" id="Q5NVE1"/>
<dbReference type="OrthoDB" id="26719at2759"/>
<dbReference type="Proteomes" id="UP000001595">
    <property type="component" value="Unplaced"/>
</dbReference>
<dbReference type="GO" id="GO:0005829">
    <property type="term" value="C:cytosol"/>
    <property type="evidence" value="ECO:0000250"/>
    <property type="project" value="UniProtKB"/>
</dbReference>
<dbReference type="GO" id="GO:0008897">
    <property type="term" value="F:holo-[acyl-carrier-protein] synthase activity"/>
    <property type="evidence" value="ECO:0000250"/>
    <property type="project" value="UniProtKB"/>
</dbReference>
<dbReference type="GO" id="GO:0000287">
    <property type="term" value="F:magnesium ion binding"/>
    <property type="evidence" value="ECO:0000250"/>
    <property type="project" value="UniProtKB"/>
</dbReference>
<dbReference type="GO" id="GO:0019878">
    <property type="term" value="P:lysine biosynthetic process via aminoadipic acid"/>
    <property type="evidence" value="ECO:0007669"/>
    <property type="project" value="TreeGrafter"/>
</dbReference>
<dbReference type="GO" id="GO:0051604">
    <property type="term" value="P:protein maturation"/>
    <property type="evidence" value="ECO:0000250"/>
    <property type="project" value="UniProtKB"/>
</dbReference>
<dbReference type="FunFam" id="3.90.470.20:FF:000006">
    <property type="entry name" value="L-aminoadipate-semialdehyde dehydrogenase-phosphopantetheinyl transferase"/>
    <property type="match status" value="1"/>
</dbReference>
<dbReference type="Gene3D" id="3.90.470.20">
    <property type="entry name" value="4'-phosphopantetheinyl transferase domain"/>
    <property type="match status" value="2"/>
</dbReference>
<dbReference type="InterPro" id="IPR008278">
    <property type="entry name" value="4-PPantetheinyl_Trfase_dom"/>
</dbReference>
<dbReference type="InterPro" id="IPR037143">
    <property type="entry name" value="4-PPantetheinyl_Trfase_dom_sf"/>
</dbReference>
<dbReference type="InterPro" id="IPR055066">
    <property type="entry name" value="AASDHPPT_N"/>
</dbReference>
<dbReference type="InterPro" id="IPR050559">
    <property type="entry name" value="P-Pant_transferase_sf"/>
</dbReference>
<dbReference type="PANTHER" id="PTHR12215:SF10">
    <property type="entry name" value="L-AMINOADIPATE-SEMIALDEHYDE DEHYDROGENASE-PHOSPHOPANTETHEINYL TRANSFERASE"/>
    <property type="match status" value="1"/>
</dbReference>
<dbReference type="PANTHER" id="PTHR12215">
    <property type="entry name" value="PHOSPHOPANTETHEINE TRANSFERASE"/>
    <property type="match status" value="1"/>
</dbReference>
<dbReference type="Pfam" id="PF22624">
    <property type="entry name" value="AASDHPPT_N"/>
    <property type="match status" value="1"/>
</dbReference>
<dbReference type="Pfam" id="PF01648">
    <property type="entry name" value="ACPS"/>
    <property type="match status" value="1"/>
</dbReference>
<dbReference type="SUPFAM" id="SSF56214">
    <property type="entry name" value="4'-phosphopantetheinyl transferase"/>
    <property type="match status" value="2"/>
</dbReference>